<accession>Q4L4G3</accession>
<gene>
    <name evidence="1" type="primary">murB</name>
    <name type="ordered locus">SH2153</name>
</gene>
<protein>
    <recommendedName>
        <fullName evidence="1">UDP-N-acetylenolpyruvoylglucosamine reductase</fullName>
        <ecNumber evidence="1">1.3.1.98</ecNumber>
    </recommendedName>
    <alternativeName>
        <fullName evidence="1">UDP-N-acetylmuramate dehydrogenase</fullName>
    </alternativeName>
</protein>
<sequence length="307" mass="33941">MLKQEDILQDLKSLIPEDIIKVNEPLKRYTYTETGGNADFYLSPTKNEDVQAIVRYAKEKDIPVTYLGNGSNIIIREGGIRGIVISLLSLNHINVSDDAIIAGSGSAIIDVSRAARDHVLTGLEFACGIPGSVGGAVYMNAGAYGGEIKDCIDYALCVNEEGDLIQFTNKELELDYRNSIVQKQHLVVLEAAFTLEPGKLDEIQAKMDDLTERRESKQPLEYPSCGSVFQRPPGHFAGKLIQDSDLQGYRVGGVEVSKKHAGFMVNVDNGTATDYEDLIHHVQKVVKEKFDVELHREVRIIGEHPKE</sequence>
<evidence type="ECO:0000255" key="1">
    <source>
        <dbReference type="HAMAP-Rule" id="MF_00037"/>
    </source>
</evidence>
<comment type="function">
    <text evidence="1">Cell wall formation.</text>
</comment>
<comment type="catalytic activity">
    <reaction evidence="1">
        <text>UDP-N-acetyl-alpha-D-muramate + NADP(+) = UDP-N-acetyl-3-O-(1-carboxyvinyl)-alpha-D-glucosamine + NADPH + H(+)</text>
        <dbReference type="Rhea" id="RHEA:12248"/>
        <dbReference type="ChEBI" id="CHEBI:15378"/>
        <dbReference type="ChEBI" id="CHEBI:57783"/>
        <dbReference type="ChEBI" id="CHEBI:58349"/>
        <dbReference type="ChEBI" id="CHEBI:68483"/>
        <dbReference type="ChEBI" id="CHEBI:70757"/>
        <dbReference type="EC" id="1.3.1.98"/>
    </reaction>
</comment>
<comment type="cofactor">
    <cofactor evidence="1">
        <name>FAD</name>
        <dbReference type="ChEBI" id="CHEBI:57692"/>
    </cofactor>
</comment>
<comment type="pathway">
    <text evidence="1">Cell wall biogenesis; peptidoglycan biosynthesis.</text>
</comment>
<comment type="subcellular location">
    <subcellularLocation>
        <location evidence="1">Cytoplasm</location>
    </subcellularLocation>
</comment>
<comment type="similarity">
    <text evidence="1">Belongs to the MurB family.</text>
</comment>
<proteinExistence type="inferred from homology"/>
<dbReference type="EC" id="1.3.1.98" evidence="1"/>
<dbReference type="EMBL" id="AP006716">
    <property type="protein sequence ID" value="BAE05462.1"/>
    <property type="molecule type" value="Genomic_DNA"/>
</dbReference>
<dbReference type="RefSeq" id="WP_011276415.1">
    <property type="nucleotide sequence ID" value="NC_007168.1"/>
</dbReference>
<dbReference type="SMR" id="Q4L4G3"/>
<dbReference type="GeneID" id="93781475"/>
<dbReference type="KEGG" id="sha:SH2153"/>
<dbReference type="eggNOG" id="COG0812">
    <property type="taxonomic scope" value="Bacteria"/>
</dbReference>
<dbReference type="HOGENOM" id="CLU_035304_1_1_9"/>
<dbReference type="OrthoDB" id="9804753at2"/>
<dbReference type="UniPathway" id="UPA00219"/>
<dbReference type="Proteomes" id="UP000000543">
    <property type="component" value="Chromosome"/>
</dbReference>
<dbReference type="GO" id="GO:0005829">
    <property type="term" value="C:cytosol"/>
    <property type="evidence" value="ECO:0007669"/>
    <property type="project" value="TreeGrafter"/>
</dbReference>
<dbReference type="GO" id="GO:0071949">
    <property type="term" value="F:FAD binding"/>
    <property type="evidence" value="ECO:0007669"/>
    <property type="project" value="InterPro"/>
</dbReference>
<dbReference type="GO" id="GO:0008762">
    <property type="term" value="F:UDP-N-acetylmuramate dehydrogenase activity"/>
    <property type="evidence" value="ECO:0007669"/>
    <property type="project" value="UniProtKB-UniRule"/>
</dbReference>
<dbReference type="GO" id="GO:0051301">
    <property type="term" value="P:cell division"/>
    <property type="evidence" value="ECO:0007669"/>
    <property type="project" value="UniProtKB-KW"/>
</dbReference>
<dbReference type="GO" id="GO:0071555">
    <property type="term" value="P:cell wall organization"/>
    <property type="evidence" value="ECO:0007669"/>
    <property type="project" value="UniProtKB-KW"/>
</dbReference>
<dbReference type="GO" id="GO:0009252">
    <property type="term" value="P:peptidoglycan biosynthetic process"/>
    <property type="evidence" value="ECO:0007669"/>
    <property type="project" value="UniProtKB-UniRule"/>
</dbReference>
<dbReference type="GO" id="GO:0008360">
    <property type="term" value="P:regulation of cell shape"/>
    <property type="evidence" value="ECO:0007669"/>
    <property type="project" value="UniProtKB-KW"/>
</dbReference>
<dbReference type="FunFam" id="3.90.78.10:FF:000001">
    <property type="entry name" value="UDP-N-acetylenolpyruvoylglucosamine reductase"/>
    <property type="match status" value="1"/>
</dbReference>
<dbReference type="Gene3D" id="3.30.465.10">
    <property type="match status" value="1"/>
</dbReference>
<dbReference type="Gene3D" id="3.90.78.10">
    <property type="entry name" value="UDP-N-acetylenolpyruvoylglucosamine reductase, C-terminal domain"/>
    <property type="match status" value="1"/>
</dbReference>
<dbReference type="Gene3D" id="3.30.43.10">
    <property type="entry name" value="Uridine Diphospho-n-acetylenolpyruvylglucosamine Reductase, domain 2"/>
    <property type="match status" value="1"/>
</dbReference>
<dbReference type="HAMAP" id="MF_00037">
    <property type="entry name" value="MurB"/>
    <property type="match status" value="1"/>
</dbReference>
<dbReference type="InterPro" id="IPR016166">
    <property type="entry name" value="FAD-bd_PCMH"/>
</dbReference>
<dbReference type="InterPro" id="IPR036318">
    <property type="entry name" value="FAD-bd_PCMH-like_sf"/>
</dbReference>
<dbReference type="InterPro" id="IPR016167">
    <property type="entry name" value="FAD-bd_PCMH_sub1"/>
</dbReference>
<dbReference type="InterPro" id="IPR016169">
    <property type="entry name" value="FAD-bd_PCMH_sub2"/>
</dbReference>
<dbReference type="InterPro" id="IPR003170">
    <property type="entry name" value="MurB"/>
</dbReference>
<dbReference type="InterPro" id="IPR011601">
    <property type="entry name" value="MurB_C"/>
</dbReference>
<dbReference type="InterPro" id="IPR036635">
    <property type="entry name" value="MurB_C_sf"/>
</dbReference>
<dbReference type="InterPro" id="IPR006094">
    <property type="entry name" value="Oxid_FAD_bind_N"/>
</dbReference>
<dbReference type="NCBIfam" id="TIGR00179">
    <property type="entry name" value="murB"/>
    <property type="match status" value="1"/>
</dbReference>
<dbReference type="NCBIfam" id="NF010480">
    <property type="entry name" value="PRK13905.1"/>
    <property type="match status" value="1"/>
</dbReference>
<dbReference type="PANTHER" id="PTHR21071">
    <property type="entry name" value="UDP-N-ACETYLENOLPYRUVOYLGLUCOSAMINE REDUCTASE"/>
    <property type="match status" value="1"/>
</dbReference>
<dbReference type="PANTHER" id="PTHR21071:SF4">
    <property type="entry name" value="UDP-N-ACETYLENOLPYRUVOYLGLUCOSAMINE REDUCTASE"/>
    <property type="match status" value="1"/>
</dbReference>
<dbReference type="Pfam" id="PF01565">
    <property type="entry name" value="FAD_binding_4"/>
    <property type="match status" value="1"/>
</dbReference>
<dbReference type="Pfam" id="PF02873">
    <property type="entry name" value="MurB_C"/>
    <property type="match status" value="1"/>
</dbReference>
<dbReference type="SUPFAM" id="SSF56176">
    <property type="entry name" value="FAD-binding/transporter-associated domain-like"/>
    <property type="match status" value="1"/>
</dbReference>
<dbReference type="SUPFAM" id="SSF56194">
    <property type="entry name" value="Uridine diphospho-N-Acetylenolpyruvylglucosamine reductase, MurB, C-terminal domain"/>
    <property type="match status" value="1"/>
</dbReference>
<dbReference type="PROSITE" id="PS51387">
    <property type="entry name" value="FAD_PCMH"/>
    <property type="match status" value="1"/>
</dbReference>
<reference key="1">
    <citation type="journal article" date="2005" name="J. Bacteriol.">
        <title>Whole-genome sequencing of Staphylococcus haemolyticus uncovers the extreme plasticity of its genome and the evolution of human-colonizing staphylococcal species.</title>
        <authorList>
            <person name="Takeuchi F."/>
            <person name="Watanabe S."/>
            <person name="Baba T."/>
            <person name="Yuzawa H."/>
            <person name="Ito T."/>
            <person name="Morimoto Y."/>
            <person name="Kuroda M."/>
            <person name="Cui L."/>
            <person name="Takahashi M."/>
            <person name="Ankai A."/>
            <person name="Baba S."/>
            <person name="Fukui S."/>
            <person name="Lee J.C."/>
            <person name="Hiramatsu K."/>
        </authorList>
    </citation>
    <scope>NUCLEOTIDE SEQUENCE [LARGE SCALE GENOMIC DNA]</scope>
    <source>
        <strain>JCSC1435</strain>
    </source>
</reference>
<keyword id="KW-0131">Cell cycle</keyword>
<keyword id="KW-0132">Cell division</keyword>
<keyword id="KW-0133">Cell shape</keyword>
<keyword id="KW-0961">Cell wall biogenesis/degradation</keyword>
<keyword id="KW-0963">Cytoplasm</keyword>
<keyword id="KW-0274">FAD</keyword>
<keyword id="KW-0285">Flavoprotein</keyword>
<keyword id="KW-0521">NADP</keyword>
<keyword id="KW-0560">Oxidoreductase</keyword>
<keyword id="KW-0573">Peptidoglycan synthesis</keyword>
<organism>
    <name type="scientific">Staphylococcus haemolyticus (strain JCSC1435)</name>
    <dbReference type="NCBI Taxonomy" id="279808"/>
    <lineage>
        <taxon>Bacteria</taxon>
        <taxon>Bacillati</taxon>
        <taxon>Bacillota</taxon>
        <taxon>Bacilli</taxon>
        <taxon>Bacillales</taxon>
        <taxon>Staphylococcaceae</taxon>
        <taxon>Staphylococcus</taxon>
    </lineage>
</organism>
<feature type="chain" id="PRO_0000224722" description="UDP-N-acetylenolpyruvoylglucosamine reductase">
    <location>
        <begin position="1"/>
        <end position="307"/>
    </location>
</feature>
<feature type="domain" description="FAD-binding PCMH-type" evidence="1">
    <location>
        <begin position="34"/>
        <end position="198"/>
    </location>
</feature>
<feature type="active site" evidence="1">
    <location>
        <position position="177"/>
    </location>
</feature>
<feature type="active site" description="Proton donor" evidence="1">
    <location>
        <position position="227"/>
    </location>
</feature>
<feature type="active site" evidence="1">
    <location>
        <position position="297"/>
    </location>
</feature>
<name>MURB_STAHJ</name>